<sequence length="251" mass="26559">MRTPLIAGNWKLFKTLADATALIDELVPLVSDVKDVEIVVAPVFTAINTVAKAAGKTGVKVAAQDCYWEDEGAFTGEVSPKLLKDAGCSHVIIGHSERRQYFGETDGTVNLKTKAAIRAGLTVLLCVGESLAQRESNDTFKVIETQVRGGLADIPAAELTQIVVAYEPVWAIGTGKTASDAQAQEVHAFIRTLVAQIYGPSEADAMRILYGGSVKPENIKGLMSQPDIDGALVGGASLKAESFAGIVRFKG</sequence>
<reference key="1">
    <citation type="submission" date="2008-05" db="EMBL/GenBank/DDBJ databases">
        <title>Complete sequence of chromosome of Geobacter lovleyi SZ.</title>
        <authorList>
            <consortium name="US DOE Joint Genome Institute"/>
            <person name="Lucas S."/>
            <person name="Copeland A."/>
            <person name="Lapidus A."/>
            <person name="Glavina del Rio T."/>
            <person name="Dalin E."/>
            <person name="Tice H."/>
            <person name="Bruce D."/>
            <person name="Goodwin L."/>
            <person name="Pitluck S."/>
            <person name="Chertkov O."/>
            <person name="Meincke L."/>
            <person name="Brettin T."/>
            <person name="Detter J.C."/>
            <person name="Han C."/>
            <person name="Tapia R."/>
            <person name="Kuske C.R."/>
            <person name="Schmutz J."/>
            <person name="Larimer F."/>
            <person name="Land M."/>
            <person name="Hauser L."/>
            <person name="Kyrpides N."/>
            <person name="Mikhailova N."/>
            <person name="Sung Y."/>
            <person name="Fletcher K.E."/>
            <person name="Ritalahti K.M."/>
            <person name="Loeffler F.E."/>
            <person name="Richardson P."/>
        </authorList>
    </citation>
    <scope>NUCLEOTIDE SEQUENCE [LARGE SCALE GENOMIC DNA]</scope>
    <source>
        <strain>ATCC BAA-1151 / DSM 17278 / SZ</strain>
    </source>
</reference>
<organism>
    <name type="scientific">Trichlorobacter lovleyi (strain ATCC BAA-1151 / DSM 17278 / SZ)</name>
    <name type="common">Geobacter lovleyi</name>
    <dbReference type="NCBI Taxonomy" id="398767"/>
    <lineage>
        <taxon>Bacteria</taxon>
        <taxon>Pseudomonadati</taxon>
        <taxon>Thermodesulfobacteriota</taxon>
        <taxon>Desulfuromonadia</taxon>
        <taxon>Geobacterales</taxon>
        <taxon>Geobacteraceae</taxon>
        <taxon>Trichlorobacter</taxon>
    </lineage>
</organism>
<protein>
    <recommendedName>
        <fullName evidence="1">Triosephosphate isomerase</fullName>
        <shortName evidence="1">TIM</shortName>
        <shortName evidence="1">TPI</shortName>
        <ecNumber evidence="1">5.3.1.1</ecNumber>
    </recommendedName>
    <alternativeName>
        <fullName evidence="1">Triose-phosphate isomerase</fullName>
    </alternativeName>
</protein>
<comment type="function">
    <text evidence="1">Involved in the gluconeogenesis. Catalyzes stereospecifically the conversion of dihydroxyacetone phosphate (DHAP) to D-glyceraldehyde-3-phosphate (G3P).</text>
</comment>
<comment type="catalytic activity">
    <reaction evidence="1">
        <text>D-glyceraldehyde 3-phosphate = dihydroxyacetone phosphate</text>
        <dbReference type="Rhea" id="RHEA:18585"/>
        <dbReference type="ChEBI" id="CHEBI:57642"/>
        <dbReference type="ChEBI" id="CHEBI:59776"/>
        <dbReference type="EC" id="5.3.1.1"/>
    </reaction>
</comment>
<comment type="pathway">
    <text evidence="1">Carbohydrate biosynthesis; gluconeogenesis.</text>
</comment>
<comment type="pathway">
    <text evidence="1">Carbohydrate degradation; glycolysis; D-glyceraldehyde 3-phosphate from glycerone phosphate: step 1/1.</text>
</comment>
<comment type="subunit">
    <text evidence="1">Homodimer.</text>
</comment>
<comment type="subcellular location">
    <subcellularLocation>
        <location evidence="1">Cytoplasm</location>
    </subcellularLocation>
</comment>
<comment type="similarity">
    <text evidence="1">Belongs to the triosephosphate isomerase family.</text>
</comment>
<keyword id="KW-0963">Cytoplasm</keyword>
<keyword id="KW-0312">Gluconeogenesis</keyword>
<keyword id="KW-0324">Glycolysis</keyword>
<keyword id="KW-0413">Isomerase</keyword>
<keyword id="KW-1185">Reference proteome</keyword>
<evidence type="ECO:0000255" key="1">
    <source>
        <dbReference type="HAMAP-Rule" id="MF_00147"/>
    </source>
</evidence>
<dbReference type="EC" id="5.3.1.1" evidence="1"/>
<dbReference type="EMBL" id="CP001089">
    <property type="protein sequence ID" value="ACD95334.1"/>
    <property type="molecule type" value="Genomic_DNA"/>
</dbReference>
<dbReference type="RefSeq" id="WP_012469676.1">
    <property type="nucleotide sequence ID" value="NC_010814.1"/>
</dbReference>
<dbReference type="SMR" id="B3E9Q8"/>
<dbReference type="STRING" id="398767.Glov_1618"/>
<dbReference type="KEGG" id="glo:Glov_1618"/>
<dbReference type="eggNOG" id="COG0149">
    <property type="taxonomic scope" value="Bacteria"/>
</dbReference>
<dbReference type="HOGENOM" id="CLU_024251_2_3_7"/>
<dbReference type="OrthoDB" id="9809429at2"/>
<dbReference type="UniPathway" id="UPA00109">
    <property type="reaction ID" value="UER00189"/>
</dbReference>
<dbReference type="UniPathway" id="UPA00138"/>
<dbReference type="Proteomes" id="UP000002420">
    <property type="component" value="Chromosome"/>
</dbReference>
<dbReference type="GO" id="GO:0005829">
    <property type="term" value="C:cytosol"/>
    <property type="evidence" value="ECO:0007669"/>
    <property type="project" value="TreeGrafter"/>
</dbReference>
<dbReference type="GO" id="GO:0004807">
    <property type="term" value="F:triose-phosphate isomerase activity"/>
    <property type="evidence" value="ECO:0007669"/>
    <property type="project" value="UniProtKB-UniRule"/>
</dbReference>
<dbReference type="GO" id="GO:0006094">
    <property type="term" value="P:gluconeogenesis"/>
    <property type="evidence" value="ECO:0007669"/>
    <property type="project" value="UniProtKB-UniRule"/>
</dbReference>
<dbReference type="GO" id="GO:0046166">
    <property type="term" value="P:glyceraldehyde-3-phosphate biosynthetic process"/>
    <property type="evidence" value="ECO:0007669"/>
    <property type="project" value="TreeGrafter"/>
</dbReference>
<dbReference type="GO" id="GO:0019563">
    <property type="term" value="P:glycerol catabolic process"/>
    <property type="evidence" value="ECO:0007669"/>
    <property type="project" value="TreeGrafter"/>
</dbReference>
<dbReference type="GO" id="GO:0006096">
    <property type="term" value="P:glycolytic process"/>
    <property type="evidence" value="ECO:0007669"/>
    <property type="project" value="UniProtKB-UniRule"/>
</dbReference>
<dbReference type="CDD" id="cd00311">
    <property type="entry name" value="TIM"/>
    <property type="match status" value="1"/>
</dbReference>
<dbReference type="FunFam" id="3.20.20.70:FF:000016">
    <property type="entry name" value="Triosephosphate isomerase"/>
    <property type="match status" value="1"/>
</dbReference>
<dbReference type="Gene3D" id="3.20.20.70">
    <property type="entry name" value="Aldolase class I"/>
    <property type="match status" value="1"/>
</dbReference>
<dbReference type="HAMAP" id="MF_00147_B">
    <property type="entry name" value="TIM_B"/>
    <property type="match status" value="1"/>
</dbReference>
<dbReference type="InterPro" id="IPR013785">
    <property type="entry name" value="Aldolase_TIM"/>
</dbReference>
<dbReference type="InterPro" id="IPR035990">
    <property type="entry name" value="TIM_sf"/>
</dbReference>
<dbReference type="InterPro" id="IPR022896">
    <property type="entry name" value="TrioseP_Isoase_bac/euk"/>
</dbReference>
<dbReference type="InterPro" id="IPR000652">
    <property type="entry name" value="Triosephosphate_isomerase"/>
</dbReference>
<dbReference type="InterPro" id="IPR020861">
    <property type="entry name" value="Triosephosphate_isomerase_AS"/>
</dbReference>
<dbReference type="NCBIfam" id="TIGR00419">
    <property type="entry name" value="tim"/>
    <property type="match status" value="1"/>
</dbReference>
<dbReference type="PANTHER" id="PTHR21139">
    <property type="entry name" value="TRIOSEPHOSPHATE ISOMERASE"/>
    <property type="match status" value="1"/>
</dbReference>
<dbReference type="PANTHER" id="PTHR21139:SF42">
    <property type="entry name" value="TRIOSEPHOSPHATE ISOMERASE"/>
    <property type="match status" value="1"/>
</dbReference>
<dbReference type="Pfam" id="PF00121">
    <property type="entry name" value="TIM"/>
    <property type="match status" value="1"/>
</dbReference>
<dbReference type="SUPFAM" id="SSF51351">
    <property type="entry name" value="Triosephosphate isomerase (TIM)"/>
    <property type="match status" value="1"/>
</dbReference>
<dbReference type="PROSITE" id="PS00171">
    <property type="entry name" value="TIM_1"/>
    <property type="match status" value="1"/>
</dbReference>
<dbReference type="PROSITE" id="PS51440">
    <property type="entry name" value="TIM_2"/>
    <property type="match status" value="1"/>
</dbReference>
<gene>
    <name evidence="1" type="primary">tpiA</name>
    <name type="ordered locus">Glov_1618</name>
</gene>
<name>TPIS_TRIL1</name>
<accession>B3E9Q8</accession>
<proteinExistence type="inferred from homology"/>
<feature type="chain" id="PRO_1000096502" description="Triosephosphate isomerase">
    <location>
        <begin position="1"/>
        <end position="251"/>
    </location>
</feature>
<feature type="active site" description="Electrophile" evidence="1">
    <location>
        <position position="95"/>
    </location>
</feature>
<feature type="active site" description="Proton acceptor" evidence="1">
    <location>
        <position position="167"/>
    </location>
</feature>
<feature type="binding site" evidence="1">
    <location>
        <begin position="9"/>
        <end position="11"/>
    </location>
    <ligand>
        <name>substrate</name>
    </ligand>
</feature>
<feature type="binding site" evidence="1">
    <location>
        <position position="173"/>
    </location>
    <ligand>
        <name>substrate</name>
    </ligand>
</feature>
<feature type="binding site" evidence="1">
    <location>
        <position position="213"/>
    </location>
    <ligand>
        <name>substrate</name>
    </ligand>
</feature>
<feature type="binding site" evidence="1">
    <location>
        <begin position="234"/>
        <end position="235"/>
    </location>
    <ligand>
        <name>substrate</name>
    </ligand>
</feature>